<gene>
    <name evidence="6" type="primary">pdeL</name>
    <name type="synonym">yahA</name>
    <name type="ordered locus">b0315</name>
    <name type="ordered locus">JW0307</name>
</gene>
<accession>P21514</accession>
<accession>P75689</accession>
<accession>Q2MCA8</accession>
<sequence>MNSCDFRVFLQEFGTTVHLSLPGSVSEKERLLLKLLMQGMSVTEISQYRNRSAKTISHQKKQLFEKLGIQSDITFWRDIFFQYNPEIISATGSNSHRYINDNHYHHIVTPEAISLALENHEFKPWIQPVFCAQTGVLTGCEVLVRWEHPQTGIIPPDQFIPLAESSGLIVIMTRQLMKQTADILMPVKHLLPDNFHIGINVSAGCFLAAGFEKECLNLVNKLGNDKIKLVLELTERNPIPVTPEARAIFDSLHQHNITFALDDFGTGYATYRYLQAFPVDFIKIDKSFVQMASVDEISGHIVDNIVELARKPGLSIVAEGVETQEQADLMIGKGVHFLQGYLYSPPVPGNKFISEWVMKAGG</sequence>
<organism>
    <name type="scientific">Escherichia coli (strain K12)</name>
    <dbReference type="NCBI Taxonomy" id="83333"/>
    <lineage>
        <taxon>Bacteria</taxon>
        <taxon>Pseudomonadati</taxon>
        <taxon>Pseudomonadota</taxon>
        <taxon>Gammaproteobacteria</taxon>
        <taxon>Enterobacterales</taxon>
        <taxon>Enterobacteriaceae</taxon>
        <taxon>Escherichia</taxon>
    </lineage>
</organism>
<name>PDEL_ECOLI</name>
<protein>
    <recommendedName>
        <fullName evidence="7">Cyclic di-GMP phosphodiesterase PdeL</fullName>
        <ecNumber evidence="3 4 5">3.1.4.52</ecNumber>
    </recommendedName>
</protein>
<dbReference type="EC" id="3.1.4.52" evidence="3 4 5"/>
<dbReference type="EMBL" id="U73857">
    <property type="protein sequence ID" value="AAB18041.1"/>
    <property type="status" value="ALT_INIT"/>
    <property type="molecule type" value="Genomic_DNA"/>
</dbReference>
<dbReference type="EMBL" id="U00096">
    <property type="protein sequence ID" value="AAC73418.1"/>
    <property type="molecule type" value="Genomic_DNA"/>
</dbReference>
<dbReference type="EMBL" id="AP009048">
    <property type="protein sequence ID" value="BAE76098.1"/>
    <property type="molecule type" value="Genomic_DNA"/>
</dbReference>
<dbReference type="EMBL" id="X52905">
    <property type="protein sequence ID" value="CAA37089.1"/>
    <property type="molecule type" value="Genomic_DNA"/>
</dbReference>
<dbReference type="PIR" id="C64758">
    <property type="entry name" value="C64758"/>
</dbReference>
<dbReference type="RefSeq" id="NP_414849.1">
    <property type="nucleotide sequence ID" value="NC_000913.3"/>
</dbReference>
<dbReference type="RefSeq" id="WP_001301264.1">
    <property type="nucleotide sequence ID" value="NZ_SSZK01000075.1"/>
</dbReference>
<dbReference type="PDB" id="4KIE">
    <property type="method" value="X-ray"/>
    <property type="resolution" value="1.70 A"/>
    <property type="chains" value="A=96-362"/>
</dbReference>
<dbReference type="PDB" id="4LJ3">
    <property type="method" value="X-ray"/>
    <property type="resolution" value="1.70 A"/>
    <property type="chains" value="A/B=101-362"/>
</dbReference>
<dbReference type="PDB" id="4LYK">
    <property type="method" value="X-ray"/>
    <property type="resolution" value="2.40 A"/>
    <property type="chains" value="A/B/C/D=101-362"/>
</dbReference>
<dbReference type="PDB" id="7PK5">
    <property type="method" value="X-ray"/>
    <property type="resolution" value="4.40 A"/>
    <property type="chains" value="A/B/C/D=2-362"/>
</dbReference>
<dbReference type="PDBsum" id="4KIE"/>
<dbReference type="PDBsum" id="4LJ3"/>
<dbReference type="PDBsum" id="4LYK"/>
<dbReference type="PDBsum" id="7PK5"/>
<dbReference type="SMR" id="P21514"/>
<dbReference type="BioGRID" id="4262803">
    <property type="interactions" value="105"/>
</dbReference>
<dbReference type="FunCoup" id="P21514">
    <property type="interactions" value="14"/>
</dbReference>
<dbReference type="IntAct" id="P21514">
    <property type="interactions" value="3"/>
</dbReference>
<dbReference type="STRING" id="511145.b0315"/>
<dbReference type="jPOST" id="P21514"/>
<dbReference type="PaxDb" id="511145-b0315"/>
<dbReference type="EnsemblBacteria" id="AAC73418">
    <property type="protein sequence ID" value="AAC73418"/>
    <property type="gene ID" value="b0315"/>
</dbReference>
<dbReference type="GeneID" id="947459"/>
<dbReference type="KEGG" id="ecj:JW0307"/>
<dbReference type="KEGG" id="eco:b0315"/>
<dbReference type="KEGG" id="ecoc:C3026_01545"/>
<dbReference type="KEGG" id="ecoc:C3026_24715"/>
<dbReference type="PATRIC" id="fig|1411691.4.peg.1962"/>
<dbReference type="EchoBASE" id="EB1218"/>
<dbReference type="eggNOG" id="COG2200">
    <property type="taxonomic scope" value="Bacteria"/>
</dbReference>
<dbReference type="eggNOG" id="COG2771">
    <property type="taxonomic scope" value="Bacteria"/>
</dbReference>
<dbReference type="HOGENOM" id="CLU_000445_70_50_6"/>
<dbReference type="InParanoid" id="P21514"/>
<dbReference type="OMA" id="RICHIEN"/>
<dbReference type="OrthoDB" id="675397at2"/>
<dbReference type="PhylomeDB" id="P21514"/>
<dbReference type="BioCyc" id="EcoCyc:EG11236-MONOMER"/>
<dbReference type="BioCyc" id="MetaCyc:EG11236-MONOMER"/>
<dbReference type="SABIO-RK" id="P21514"/>
<dbReference type="EvolutionaryTrace" id="P21514"/>
<dbReference type="PRO" id="PR:P21514"/>
<dbReference type="Proteomes" id="UP000000625">
    <property type="component" value="Chromosome"/>
</dbReference>
<dbReference type="GO" id="GO:0005886">
    <property type="term" value="C:plasma membrane"/>
    <property type="evidence" value="ECO:0000318"/>
    <property type="project" value="GO_Central"/>
</dbReference>
<dbReference type="GO" id="GO:0071111">
    <property type="term" value="F:cyclic-guanylate-specific phosphodiesterase activity"/>
    <property type="evidence" value="ECO:0000314"/>
    <property type="project" value="EcoCyc"/>
</dbReference>
<dbReference type="GO" id="GO:0046872">
    <property type="term" value="F:metal ion binding"/>
    <property type="evidence" value="ECO:0007669"/>
    <property type="project" value="UniProtKB-KW"/>
</dbReference>
<dbReference type="GO" id="GO:0042803">
    <property type="term" value="F:protein homodimerization activity"/>
    <property type="evidence" value="ECO:0000314"/>
    <property type="project" value="EcoCyc"/>
</dbReference>
<dbReference type="GO" id="GO:0000976">
    <property type="term" value="F:transcription cis-regulatory region binding"/>
    <property type="evidence" value="ECO:0000314"/>
    <property type="project" value="EcoCyc"/>
</dbReference>
<dbReference type="GO" id="GO:0045893">
    <property type="term" value="P:positive regulation of DNA-templated transcription"/>
    <property type="evidence" value="ECO:0000315"/>
    <property type="project" value="EcoCyc"/>
</dbReference>
<dbReference type="GO" id="GO:1900190">
    <property type="term" value="P:regulation of single-species biofilm formation"/>
    <property type="evidence" value="ECO:0000318"/>
    <property type="project" value="GO_Central"/>
</dbReference>
<dbReference type="CDD" id="cd01948">
    <property type="entry name" value="EAL"/>
    <property type="match status" value="1"/>
</dbReference>
<dbReference type="CDD" id="cd06170">
    <property type="entry name" value="LuxR_C_like"/>
    <property type="match status" value="1"/>
</dbReference>
<dbReference type="FunFam" id="3.20.20.450:FF:000001">
    <property type="entry name" value="Cyclic di-GMP phosphodiesterase yahA"/>
    <property type="match status" value="1"/>
</dbReference>
<dbReference type="Gene3D" id="3.20.20.450">
    <property type="entry name" value="EAL domain"/>
    <property type="match status" value="1"/>
</dbReference>
<dbReference type="Gene3D" id="1.10.10.10">
    <property type="entry name" value="Winged helix-like DNA-binding domain superfamily/Winged helix DNA-binding domain"/>
    <property type="match status" value="1"/>
</dbReference>
<dbReference type="InterPro" id="IPR050706">
    <property type="entry name" value="Cyclic-di-GMP_PDE-like"/>
</dbReference>
<dbReference type="InterPro" id="IPR001633">
    <property type="entry name" value="EAL_dom"/>
</dbReference>
<dbReference type="InterPro" id="IPR035919">
    <property type="entry name" value="EAL_sf"/>
</dbReference>
<dbReference type="InterPro" id="IPR016032">
    <property type="entry name" value="Sig_transdc_resp-reg_C-effctor"/>
</dbReference>
<dbReference type="InterPro" id="IPR000792">
    <property type="entry name" value="Tscrpt_reg_LuxR_C"/>
</dbReference>
<dbReference type="InterPro" id="IPR036388">
    <property type="entry name" value="WH-like_DNA-bd_sf"/>
</dbReference>
<dbReference type="PANTHER" id="PTHR33121">
    <property type="entry name" value="CYCLIC DI-GMP PHOSPHODIESTERASE PDEF"/>
    <property type="match status" value="1"/>
</dbReference>
<dbReference type="PANTHER" id="PTHR33121:SF80">
    <property type="entry name" value="CYCLIC DI-GMP PHOSPHODIESTERASE PDEL"/>
    <property type="match status" value="1"/>
</dbReference>
<dbReference type="Pfam" id="PF00563">
    <property type="entry name" value="EAL"/>
    <property type="match status" value="1"/>
</dbReference>
<dbReference type="Pfam" id="PF00196">
    <property type="entry name" value="GerE"/>
    <property type="match status" value="1"/>
</dbReference>
<dbReference type="SMART" id="SM00052">
    <property type="entry name" value="EAL"/>
    <property type="match status" value="1"/>
</dbReference>
<dbReference type="SMART" id="SM00421">
    <property type="entry name" value="HTH_LUXR"/>
    <property type="match status" value="1"/>
</dbReference>
<dbReference type="SUPFAM" id="SSF46894">
    <property type="entry name" value="C-terminal effector domain of the bipartite response regulators"/>
    <property type="match status" value="1"/>
</dbReference>
<dbReference type="SUPFAM" id="SSF141868">
    <property type="entry name" value="EAL domain-like"/>
    <property type="match status" value="1"/>
</dbReference>
<dbReference type="PROSITE" id="PS50883">
    <property type="entry name" value="EAL"/>
    <property type="match status" value="1"/>
</dbReference>
<dbReference type="PROSITE" id="PS50043">
    <property type="entry name" value="HTH_LUXR_2"/>
    <property type="match status" value="1"/>
</dbReference>
<reference key="1">
    <citation type="submission" date="1997-01" db="EMBL/GenBank/DDBJ databases">
        <title>Sequence of minutes 4-25 of Escherichia coli.</title>
        <authorList>
            <person name="Chung E."/>
            <person name="Allen E."/>
            <person name="Araujo R."/>
            <person name="Aparicio A.M."/>
            <person name="Davis K."/>
            <person name="Duncan M."/>
            <person name="Federspiel N."/>
            <person name="Hyman R."/>
            <person name="Kalman S."/>
            <person name="Komp C."/>
            <person name="Kurdi O."/>
            <person name="Lew H."/>
            <person name="Lin D."/>
            <person name="Namath A."/>
            <person name="Oefner P."/>
            <person name="Roberts D."/>
            <person name="Schramm S."/>
            <person name="Davis R.W."/>
        </authorList>
    </citation>
    <scope>NUCLEOTIDE SEQUENCE [LARGE SCALE GENOMIC DNA]</scope>
    <source>
        <strain>K12 / MG1655 / ATCC 47076</strain>
    </source>
</reference>
<reference key="2">
    <citation type="journal article" date="1997" name="Science">
        <title>The complete genome sequence of Escherichia coli K-12.</title>
        <authorList>
            <person name="Blattner F.R."/>
            <person name="Plunkett G. III"/>
            <person name="Bloch C.A."/>
            <person name="Perna N.T."/>
            <person name="Burland V."/>
            <person name="Riley M."/>
            <person name="Collado-Vides J."/>
            <person name="Glasner J.D."/>
            <person name="Rode C.K."/>
            <person name="Mayhew G.F."/>
            <person name="Gregor J."/>
            <person name="Davis N.W."/>
            <person name="Kirkpatrick H.A."/>
            <person name="Goeden M.A."/>
            <person name="Rose D.J."/>
            <person name="Mau B."/>
            <person name="Shao Y."/>
        </authorList>
    </citation>
    <scope>NUCLEOTIDE SEQUENCE [LARGE SCALE GENOMIC DNA]</scope>
    <source>
        <strain>K12 / MG1655 / ATCC 47076</strain>
    </source>
</reference>
<reference key="3">
    <citation type="journal article" date="2006" name="Mol. Syst. Biol.">
        <title>Highly accurate genome sequences of Escherichia coli K-12 strains MG1655 and W3110.</title>
        <authorList>
            <person name="Hayashi K."/>
            <person name="Morooka N."/>
            <person name="Yamamoto Y."/>
            <person name="Fujita K."/>
            <person name="Isono K."/>
            <person name="Choi S."/>
            <person name="Ohtsubo E."/>
            <person name="Baba T."/>
            <person name="Wanner B.L."/>
            <person name="Mori H."/>
            <person name="Horiuchi T."/>
        </authorList>
    </citation>
    <scope>NUCLEOTIDE SEQUENCE [LARGE SCALE GENOMIC DNA]</scope>
    <source>
        <strain>K12 / W3110 / ATCC 27325 / DSM 5911</strain>
    </source>
</reference>
<reference key="4">
    <citation type="journal article" date="1991" name="Mol. Microbiol.">
        <title>DNA sequence and analysis of the bet genes encoding the osmoregulatory choline-glycine betaine pathway of Escherichia coli.</title>
        <authorList>
            <person name="Lamark T."/>
            <person name="Kaasen E."/>
            <person name="Eshoo M.W."/>
            <person name="Falkenberg P."/>
            <person name="McDougall J."/>
            <person name="Strom A.R."/>
        </authorList>
    </citation>
    <scope>NUCLEOTIDE SEQUENCE [GENOMIC DNA] OF 1-126</scope>
    <source>
        <strain>K12</strain>
    </source>
</reference>
<reference key="5">
    <citation type="journal article" date="2005" name="J. Bacteriol.">
        <title>The ubiquitous protein domain EAL is a cyclic diguanylate-specific phosphodiesterase: enzymatically active and inactive EAL domains.</title>
        <authorList>
            <person name="Schmidt A.J."/>
            <person name="Ryjenkov D.A."/>
            <person name="Gomelsky M."/>
        </authorList>
    </citation>
    <scope>FUNCTION</scope>
    <scope>CATALYTIC ACTIVITY</scope>
    <scope>COFACTOR</scope>
    <scope>ACTIVITY REGULATION</scope>
    <scope>BIOPHYSICOCHEMICAL PROPERTIES</scope>
    <source>
        <strain>K12 / MG1655 / ATCC 47076</strain>
    </source>
</reference>
<reference key="6">
    <citation type="journal article" date="2015" name="J. Bacteriol.">
        <title>Systematic nomenclature for GGDEF and EAL domain-containing cyclic di-GMP turnover proteins of Escherichia coli.</title>
        <authorList>
            <person name="Hengge R."/>
            <person name="Galperin M.Y."/>
            <person name="Ghigo J.M."/>
            <person name="Gomelsky M."/>
            <person name="Green J."/>
            <person name="Hughes K.T."/>
            <person name="Jenal U."/>
            <person name="Landini P."/>
        </authorList>
    </citation>
    <scope>NOMENCLATURE</scope>
</reference>
<reference key="7">
    <citation type="journal article" date="2015" name="J. Bacteriol.">
        <title>Expression and genetic activation of cyclic di-GMP-specific phosphodiesterases in Escherichia coli.</title>
        <authorList>
            <person name="Reinders A."/>
            <person name="Hee C.S."/>
            <person name="Ozaki S."/>
            <person name="Mazur A."/>
            <person name="Boehm A."/>
            <person name="Schirmer T."/>
            <person name="Jenal U."/>
        </authorList>
    </citation>
    <scope>FUNCTION</scope>
    <scope>DNA-BINDING</scope>
    <scope>CATALYTIC ACTIVITY</scope>
    <scope>INDUCTION</scope>
    <scope>MUTAGENESIS OF LYS-60; PHE-206; PHE-249 AND GLY-299</scope>
</reference>
<reference evidence="9 10 11" key="8">
    <citation type="journal article" date="2014" name="J. Biol. Chem.">
        <title>Inherent regulation of EAL domain-catalyzed hydrolysis of second messenger cyclic di-GMP.</title>
        <authorList>
            <person name="Sundriyal A."/>
            <person name="Massa C."/>
            <person name="Samoray D."/>
            <person name="Zehender F."/>
            <person name="Sharpe T."/>
            <person name="Jenal U."/>
            <person name="Schirmer T."/>
        </authorList>
    </citation>
    <scope>X-RAY CRYSTALLOGRAPHY (1.70 ANGSTROMS) OF 96-362 IN COMPLEXES WITH MAGNESIUM; C-DI-GMP AND CALCIUM</scope>
    <scope>FUNCTION</scope>
    <scope>CATALYTIC ACTIVITY</scope>
    <scope>COFACTOR</scope>
    <scope>ACTIVITY REGULATION</scope>
    <scope>SUBUNIT</scope>
    <scope>MUTAGENESIS OF ASP-263 AND SER-298</scope>
</reference>
<proteinExistence type="evidence at protein level"/>
<keyword id="KW-0002">3D-structure</keyword>
<keyword id="KW-0973">c-di-GMP</keyword>
<keyword id="KW-0238">DNA-binding</keyword>
<keyword id="KW-0378">Hydrolase</keyword>
<keyword id="KW-0460">Magnesium</keyword>
<keyword id="KW-0464">Manganese</keyword>
<keyword id="KW-0479">Metal-binding</keyword>
<keyword id="KW-1185">Reference proteome</keyword>
<keyword id="KW-0804">Transcription</keyword>
<keyword id="KW-0805">Transcription regulation</keyword>
<feature type="chain" id="PRO_0000168573" description="Cyclic di-GMP phosphodiesterase PdeL">
    <location>
        <begin position="1"/>
        <end position="362"/>
    </location>
</feature>
<feature type="domain" description="HTH luxR-type" evidence="2">
    <location>
        <begin position="18"/>
        <end position="83"/>
    </location>
</feature>
<feature type="domain" description="EAL" evidence="1">
    <location>
        <begin position="106"/>
        <end position="360"/>
    </location>
</feature>
<feature type="DNA-binding region" description="H-T-H motif" evidence="2">
    <location>
        <begin position="42"/>
        <end position="61"/>
    </location>
</feature>
<feature type="binding site" evidence="4 10">
    <location>
        <position position="127"/>
    </location>
    <ligand>
        <name>substrate</name>
    </ligand>
</feature>
<feature type="binding site" evidence="4 11">
    <location>
        <position position="141"/>
    </location>
    <ligand>
        <name>Mg(2+)</name>
        <dbReference type="ChEBI" id="CHEBI:18420"/>
    </ligand>
</feature>
<feature type="binding site" evidence="4 10">
    <location>
        <begin position="144"/>
        <end position="145"/>
    </location>
    <ligand>
        <name>substrate</name>
    </ligand>
</feature>
<feature type="binding site" evidence="4 11">
    <location>
        <position position="200"/>
    </location>
    <ligand>
        <name>Mg(2+)</name>
        <dbReference type="ChEBI" id="CHEBI:18420"/>
    </ligand>
</feature>
<feature type="binding site" evidence="4 10">
    <location>
        <position position="200"/>
    </location>
    <ligand>
        <name>substrate</name>
    </ligand>
</feature>
<feature type="binding site" evidence="4 11">
    <location>
        <position position="232"/>
    </location>
    <ligand>
        <name>Mg(2+)</name>
        <dbReference type="ChEBI" id="CHEBI:18420"/>
    </ligand>
</feature>
<feature type="binding site" evidence="4 11">
    <location>
        <position position="262"/>
    </location>
    <ligand>
        <name>Mg(2+)</name>
        <dbReference type="ChEBI" id="CHEBI:18420"/>
    </ligand>
</feature>
<feature type="binding site" evidence="4 10">
    <location>
        <position position="262"/>
    </location>
    <ligand>
        <name>substrate</name>
    </ligand>
</feature>
<feature type="binding site" evidence="4 10">
    <location>
        <position position="286"/>
    </location>
    <ligand>
        <name>substrate</name>
    </ligand>
</feature>
<feature type="binding site" evidence="4 10">
    <location>
        <begin position="319"/>
        <end position="322"/>
    </location>
    <ligand>
        <name>substrate</name>
    </ligand>
</feature>
<feature type="binding site" evidence="4 10">
    <location>
        <position position="341"/>
    </location>
    <ligand>
        <name>substrate</name>
    </ligand>
</feature>
<feature type="mutagenesis site" description="Does not bind to the PdeL box." evidence="5">
    <original>K</original>
    <variation>A</variation>
    <location>
        <position position="60"/>
    </location>
</feature>
<feature type="mutagenesis site" description="Increases catalytic activity." evidence="5">
    <original>F</original>
    <variation>S</variation>
    <location>
        <position position="206"/>
    </location>
</feature>
<feature type="mutagenesis site" description="Increases catalytic activity." evidence="5">
    <original>F</original>
    <variation>L</variation>
    <location>
        <position position="249"/>
    </location>
</feature>
<feature type="mutagenesis site" description="Loss of activity." evidence="4">
    <original>D</original>
    <variation>N</variation>
    <location>
        <position position="263"/>
    </location>
</feature>
<feature type="mutagenesis site" description="Slow monomer-dimer exchange. Equilibrium largely on the monomeric side, in particular in the presence of substrate. Strong decrease in activity." evidence="4">
    <original>S</original>
    <variation>W</variation>
    <location>
        <position position="298"/>
    </location>
</feature>
<feature type="mutagenesis site" description="Increases catalytic activity." evidence="5">
    <original>G</original>
    <variation>S</variation>
    <location>
        <position position="299"/>
    </location>
</feature>
<feature type="strand" evidence="13">
    <location>
        <begin position="105"/>
        <end position="108"/>
    </location>
</feature>
<feature type="helix" evidence="12">
    <location>
        <begin position="110"/>
        <end position="118"/>
    </location>
</feature>
<feature type="strand" evidence="12">
    <location>
        <begin position="122"/>
        <end position="131"/>
    </location>
</feature>
<feature type="turn" evidence="13">
    <location>
        <begin position="132"/>
        <end position="134"/>
    </location>
</feature>
<feature type="strand" evidence="12">
    <location>
        <begin position="137"/>
        <end position="148"/>
    </location>
</feature>
<feature type="turn" evidence="12">
    <location>
        <begin position="149"/>
        <end position="151"/>
    </location>
</feature>
<feature type="strand" evidence="12">
    <location>
        <begin position="152"/>
        <end position="154"/>
    </location>
</feature>
<feature type="helix" evidence="12">
    <location>
        <begin position="156"/>
        <end position="158"/>
    </location>
</feature>
<feature type="helix" evidence="12">
    <location>
        <begin position="160"/>
        <end position="166"/>
    </location>
</feature>
<feature type="helix" evidence="12">
    <location>
        <begin position="169"/>
        <end position="184"/>
    </location>
</feature>
<feature type="helix" evidence="12">
    <location>
        <begin position="185"/>
        <end position="190"/>
    </location>
</feature>
<feature type="strand" evidence="12">
    <location>
        <begin position="195"/>
        <end position="200"/>
    </location>
</feature>
<feature type="helix" evidence="12">
    <location>
        <begin position="203"/>
        <end position="207"/>
    </location>
</feature>
<feature type="helix" evidence="12">
    <location>
        <begin position="211"/>
        <end position="222"/>
    </location>
</feature>
<feature type="turn" evidence="12">
    <location>
        <begin position="224"/>
        <end position="226"/>
    </location>
</feature>
<feature type="strand" evidence="12">
    <location>
        <begin position="227"/>
        <end position="237"/>
    </location>
</feature>
<feature type="helix" evidence="12">
    <location>
        <begin position="243"/>
        <end position="254"/>
    </location>
</feature>
<feature type="strand" evidence="12">
    <location>
        <begin position="258"/>
        <end position="263"/>
    </location>
</feature>
<feature type="helix" evidence="12">
    <location>
        <begin position="268"/>
        <end position="276"/>
    </location>
</feature>
<feature type="strand" evidence="12">
    <location>
        <begin position="280"/>
        <end position="284"/>
    </location>
</feature>
<feature type="helix" evidence="12">
    <location>
        <begin position="286"/>
        <end position="292"/>
    </location>
</feature>
<feature type="helix" evidence="12">
    <location>
        <begin position="296"/>
        <end position="308"/>
    </location>
</feature>
<feature type="turn" evidence="14">
    <location>
        <begin position="311"/>
        <end position="313"/>
    </location>
</feature>
<feature type="strand" evidence="12">
    <location>
        <begin position="315"/>
        <end position="318"/>
    </location>
</feature>
<feature type="helix" evidence="12">
    <location>
        <begin position="324"/>
        <end position="332"/>
    </location>
</feature>
<feature type="strand" evidence="13">
    <location>
        <begin position="337"/>
        <end position="340"/>
    </location>
</feature>
<feature type="turn" evidence="12">
    <location>
        <begin position="341"/>
        <end position="343"/>
    </location>
</feature>
<feature type="helix" evidence="12">
    <location>
        <begin position="349"/>
        <end position="356"/>
    </location>
</feature>
<evidence type="ECO:0000255" key="1">
    <source>
        <dbReference type="PROSITE-ProRule" id="PRU00074"/>
    </source>
</evidence>
<evidence type="ECO:0000255" key="2">
    <source>
        <dbReference type="PROSITE-ProRule" id="PRU00411"/>
    </source>
</evidence>
<evidence type="ECO:0000269" key="3">
    <source>
    </source>
</evidence>
<evidence type="ECO:0000269" key="4">
    <source>
    </source>
</evidence>
<evidence type="ECO:0000269" key="5">
    <source>
    </source>
</evidence>
<evidence type="ECO:0000303" key="6">
    <source>
    </source>
</evidence>
<evidence type="ECO:0000305" key="7"/>
<evidence type="ECO:0000305" key="8">
    <source>
    </source>
</evidence>
<evidence type="ECO:0007744" key="9">
    <source>
        <dbReference type="PDB" id="4KIE"/>
    </source>
</evidence>
<evidence type="ECO:0007744" key="10">
    <source>
        <dbReference type="PDB" id="4LJ3"/>
    </source>
</evidence>
<evidence type="ECO:0007744" key="11">
    <source>
        <dbReference type="PDB" id="4LYK"/>
    </source>
</evidence>
<evidence type="ECO:0007829" key="12">
    <source>
        <dbReference type="PDB" id="4KIE"/>
    </source>
</evidence>
<evidence type="ECO:0007829" key="13">
    <source>
        <dbReference type="PDB" id="4LJ3"/>
    </source>
</evidence>
<evidence type="ECO:0007829" key="14">
    <source>
        <dbReference type="PDB" id="4LYK"/>
    </source>
</evidence>
<comment type="function">
    <text evidence="3 4 5">Acts both as an enzyme and as a c-di-GMP sensor to couple transcriptional activity to the c-di-GMP status of the cell (PubMed:26553851). Phosphodiesterase (PDE) that catalyzes the hydrolysis of cyclic-di-GMP (c-di-GMP) to 5'-pGpG (PubMed:15995192, PubMed:24451384, PubMed:26553851). Also acts as a transcription factor to control its own expression (PubMed:26553851).</text>
</comment>
<comment type="catalytic activity">
    <reaction evidence="3 4 5">
        <text>3',3'-c-di-GMP + H2O = 5'-phosphoguanylyl(3'-&gt;5')guanosine + H(+)</text>
        <dbReference type="Rhea" id="RHEA:24902"/>
        <dbReference type="ChEBI" id="CHEBI:15377"/>
        <dbReference type="ChEBI" id="CHEBI:15378"/>
        <dbReference type="ChEBI" id="CHEBI:58754"/>
        <dbReference type="ChEBI" id="CHEBI:58805"/>
        <dbReference type="EC" id="3.1.4.52"/>
    </reaction>
</comment>
<comment type="cofactor">
    <cofactor evidence="3 4">
        <name>Mg(2+)</name>
        <dbReference type="ChEBI" id="CHEBI:18420"/>
    </cofactor>
    <cofactor evidence="3">
        <name>Mn(2+)</name>
        <dbReference type="ChEBI" id="CHEBI:29035"/>
    </cofactor>
</comment>
<comment type="activity regulation">
    <text evidence="3 4">Strongly inhibited by Ca(2+).</text>
</comment>
<comment type="biophysicochemical properties">
    <kinetics>
        <KM evidence="3">25 uM for c-di-GMP</KM>
    </kinetics>
    <phDependence>
        <text evidence="3">Optimum pH is 9.35.</text>
    </phDependence>
</comment>
<comment type="subunit">
    <text evidence="4">Is in a fast thermodynamic monomer-homodimer equilibrium. Dimerization is required for PDE activity. Dimerization affinity is increased about 100-fold upon substrate binding.</text>
</comment>
<comment type="induction">
    <text evidence="5">Autoregulated. Directly regulates its own expression in a c-di-GMP-dependent manner.</text>
</comment>
<comment type="miscellaneous">
    <text evidence="8">An overexpressed EAL domain (residues 77-362) has similar KM, Vmax, pH and metal dependence and subunit composition as the full-length protein.</text>
</comment>
<comment type="sequence caution" evidence="7">
    <conflict type="erroneous initiation">
        <sequence resource="EMBL-CDS" id="AAB18041"/>
    </conflict>
</comment>